<keyword id="KW-0025">Alternative splicing</keyword>
<keyword id="KW-0175">Coiled coil</keyword>
<keyword id="KW-1267">Proteomics identification</keyword>
<keyword id="KW-1185">Reference proteome</keyword>
<comment type="alternative products">
    <event type="alternative splicing"/>
    <isoform>
        <id>Q17RM4-1</id>
        <name>1</name>
        <sequence type="displayed"/>
    </isoform>
    <isoform>
        <id>Q17RM4-2</id>
        <name>2</name>
        <sequence type="described" ref="VSP_029497"/>
    </isoform>
    <isoform>
        <id>Q17RM4-3</id>
        <name>3</name>
        <sequence type="described" ref="VSP_029498"/>
    </isoform>
</comment>
<comment type="sequence caution" evidence="5">
    <conflict type="erroneous initiation">
        <sequence resource="EMBL-CDS" id="BAC11474"/>
    </conflict>
</comment>
<accession>Q17RM4</accession>
<accession>B7ZKV5</accession>
<accession>Q8NBJ3</accession>
<accession>Q8NBV2</accession>
<accession>Q96KA7</accession>
<dbReference type="EMBL" id="AK075543">
    <property type="protein sequence ID" value="BAC11686.1"/>
    <property type="molecule type" value="mRNA"/>
</dbReference>
<dbReference type="EMBL" id="BC117269">
    <property type="protein sequence ID" value="AAI17270.1"/>
    <property type="molecule type" value="mRNA"/>
</dbReference>
<dbReference type="EMBL" id="BC143398">
    <property type="protein sequence ID" value="AAI43399.1"/>
    <property type="molecule type" value="mRNA"/>
</dbReference>
<dbReference type="EMBL" id="AK075209">
    <property type="protein sequence ID" value="BAC11474.1"/>
    <property type="status" value="ALT_INIT"/>
    <property type="molecule type" value="mRNA"/>
</dbReference>
<dbReference type="CCDS" id="CCDS1945.1">
    <molecule id="Q17RM4-2"/>
</dbReference>
<dbReference type="CCDS" id="CCDS92784.1">
    <molecule id="Q17RM4-1"/>
</dbReference>
<dbReference type="RefSeq" id="NP_001352504.1">
    <molecule id="Q17RM4-1"/>
    <property type="nucleotide sequence ID" value="NM_001365575.2"/>
</dbReference>
<dbReference type="RefSeq" id="NP_116168.3">
    <molecule id="Q17RM4-2"/>
    <property type="nucleotide sequence ID" value="NM_032779.3"/>
</dbReference>
<dbReference type="BioGRID" id="124310">
    <property type="interactions" value="86"/>
</dbReference>
<dbReference type="FunCoup" id="Q17RM4">
    <property type="interactions" value="58"/>
</dbReference>
<dbReference type="IntAct" id="Q17RM4">
    <property type="interactions" value="5"/>
</dbReference>
<dbReference type="STRING" id="9606.ENSP00000290418"/>
<dbReference type="GlyGen" id="Q17RM4">
    <property type="glycosylation" value="1 site"/>
</dbReference>
<dbReference type="iPTMnet" id="Q17RM4"/>
<dbReference type="PhosphoSitePlus" id="Q17RM4"/>
<dbReference type="BioMuta" id="CCDC142"/>
<dbReference type="DMDM" id="121940584"/>
<dbReference type="jPOST" id="Q17RM4"/>
<dbReference type="MassIVE" id="Q17RM4"/>
<dbReference type="PaxDb" id="9606-ENSP00000290418"/>
<dbReference type="PeptideAtlas" id="Q17RM4"/>
<dbReference type="ProteomicsDB" id="61154">
    <molecule id="Q17RM4-1"/>
</dbReference>
<dbReference type="ProteomicsDB" id="61155">
    <molecule id="Q17RM4-2"/>
</dbReference>
<dbReference type="ProteomicsDB" id="61156">
    <molecule id="Q17RM4-3"/>
</dbReference>
<dbReference type="Antibodypedia" id="68561">
    <property type="antibodies" value="17 antibodies from 9 providers"/>
</dbReference>
<dbReference type="DNASU" id="84865"/>
<dbReference type="Ensembl" id="ENST00000290418.4">
    <molecule id="Q17RM4-2"/>
    <property type="protein sequence ID" value="ENSP00000290418.4"/>
    <property type="gene ID" value="ENSG00000135637.15"/>
</dbReference>
<dbReference type="Ensembl" id="ENST00000393965.8">
    <molecule id="Q17RM4-1"/>
    <property type="protein sequence ID" value="ENSP00000377537.3"/>
    <property type="gene ID" value="ENSG00000135637.15"/>
</dbReference>
<dbReference type="Ensembl" id="ENST00000715459.1">
    <molecule id="Q17RM4-1"/>
    <property type="protein sequence ID" value="ENSP00000520452.1"/>
    <property type="gene ID" value="ENSG00000135637.15"/>
</dbReference>
<dbReference type="GeneID" id="84865"/>
<dbReference type="KEGG" id="hsa:84865"/>
<dbReference type="MANE-Select" id="ENST00000393965.8">
    <property type="protein sequence ID" value="ENSP00000377537.3"/>
    <property type="RefSeq nucleotide sequence ID" value="NM_001365575.2"/>
    <property type="RefSeq protein sequence ID" value="NP_001352504.1"/>
</dbReference>
<dbReference type="UCSC" id="uc002slq.4">
    <molecule id="Q17RM4-1"/>
    <property type="organism name" value="human"/>
</dbReference>
<dbReference type="AGR" id="HGNC:25889"/>
<dbReference type="CTD" id="84865"/>
<dbReference type="GeneCards" id="CCDC142"/>
<dbReference type="HGNC" id="HGNC:25889">
    <property type="gene designation" value="CCDC142"/>
</dbReference>
<dbReference type="HPA" id="ENSG00000135637">
    <property type="expression patterns" value="Low tissue specificity"/>
</dbReference>
<dbReference type="neXtProt" id="NX_Q17RM4"/>
<dbReference type="OpenTargets" id="ENSG00000135637"/>
<dbReference type="PharmGKB" id="PA162381450"/>
<dbReference type="VEuPathDB" id="HostDB:ENSG00000135637"/>
<dbReference type="eggNOG" id="ENOG502QUBZ">
    <property type="taxonomic scope" value="Eukaryota"/>
</dbReference>
<dbReference type="GeneTree" id="ENSGT00390000009871"/>
<dbReference type="InParanoid" id="Q17RM4"/>
<dbReference type="OMA" id="CCCVCNE"/>
<dbReference type="OrthoDB" id="6579237at2759"/>
<dbReference type="PAN-GO" id="Q17RM4">
    <property type="GO annotations" value="0 GO annotations based on evolutionary models"/>
</dbReference>
<dbReference type="PhylomeDB" id="Q17RM4"/>
<dbReference type="TreeFam" id="TF328445"/>
<dbReference type="PathwayCommons" id="Q17RM4"/>
<dbReference type="BioGRID-ORCS" id="84865">
    <property type="hits" value="12 hits in 1156 CRISPR screens"/>
</dbReference>
<dbReference type="ChiTaRS" id="CCDC142">
    <property type="organism name" value="human"/>
</dbReference>
<dbReference type="GenomeRNAi" id="84865"/>
<dbReference type="Pharos" id="Q17RM4">
    <property type="development level" value="Tdark"/>
</dbReference>
<dbReference type="PRO" id="PR:Q17RM4"/>
<dbReference type="Proteomes" id="UP000005640">
    <property type="component" value="Chromosome 2"/>
</dbReference>
<dbReference type="RNAct" id="Q17RM4">
    <property type="molecule type" value="protein"/>
</dbReference>
<dbReference type="Bgee" id="ENSG00000135637">
    <property type="expression patterns" value="Expressed in buccal mucosa cell and 133 other cell types or tissues"/>
</dbReference>
<dbReference type="ExpressionAtlas" id="Q17RM4">
    <property type="expression patterns" value="baseline and differential"/>
</dbReference>
<dbReference type="InterPro" id="IPR056901">
    <property type="entry name" value="CC142_N"/>
</dbReference>
<dbReference type="InterPro" id="IPR026700">
    <property type="entry name" value="CCDC142"/>
</dbReference>
<dbReference type="InterPro" id="IPR055350">
    <property type="entry name" value="CCDC142_C"/>
</dbReference>
<dbReference type="PANTHER" id="PTHR21436">
    <property type="entry name" value="COILED-COIL DOMAIN-CONTAINING PROTEIN 142"/>
    <property type="match status" value="1"/>
</dbReference>
<dbReference type="PANTHER" id="PTHR21436:SF2">
    <property type="entry name" value="COILED-COIL DOMAIN-CONTAINING PROTEIN 142"/>
    <property type="match status" value="1"/>
</dbReference>
<dbReference type="Pfam" id="PF25081">
    <property type="entry name" value="CC142_N"/>
    <property type="match status" value="1"/>
</dbReference>
<dbReference type="Pfam" id="PF14923">
    <property type="entry name" value="CCDC142"/>
    <property type="match status" value="1"/>
</dbReference>
<reference key="1">
    <citation type="journal article" date="2005" name="DNA Res.">
        <title>Signal sequence and keyword trap in silico for selection of full-length human cDNAs encoding secretion or membrane proteins from oligo-capped cDNA libraries.</title>
        <authorList>
            <person name="Otsuki T."/>
            <person name="Ota T."/>
            <person name="Nishikawa T."/>
            <person name="Hayashi K."/>
            <person name="Suzuki Y."/>
            <person name="Yamamoto J."/>
            <person name="Wakamatsu A."/>
            <person name="Kimura K."/>
            <person name="Sakamoto K."/>
            <person name="Hatano N."/>
            <person name="Kawai Y."/>
            <person name="Ishii S."/>
            <person name="Saito K."/>
            <person name="Kojima S."/>
            <person name="Sugiyama T."/>
            <person name="Ono T."/>
            <person name="Okano K."/>
            <person name="Yoshikawa Y."/>
            <person name="Aotsuka S."/>
            <person name="Sasaki N."/>
            <person name="Hattori A."/>
            <person name="Okumura K."/>
            <person name="Nagai K."/>
            <person name="Sugano S."/>
            <person name="Isogai T."/>
        </authorList>
    </citation>
    <scope>NUCLEOTIDE SEQUENCE [LARGE SCALE MRNA] (ISOFORM 2)</scope>
</reference>
<reference key="2">
    <citation type="journal article" date="2004" name="Genome Res.">
        <title>The status, quality, and expansion of the NIH full-length cDNA project: the Mammalian Gene Collection (MGC).</title>
        <authorList>
            <consortium name="The MGC Project Team"/>
        </authorList>
    </citation>
    <scope>NUCLEOTIDE SEQUENCE [LARGE SCALE MRNA] (ISOFORM 1)</scope>
    <source>
        <tissue>Brain</tissue>
    </source>
</reference>
<reference key="3">
    <citation type="journal article" date="2004" name="Nat. Genet.">
        <title>Complete sequencing and characterization of 21,243 full-length human cDNAs.</title>
        <authorList>
            <person name="Ota T."/>
            <person name="Suzuki Y."/>
            <person name="Nishikawa T."/>
            <person name="Otsuki T."/>
            <person name="Sugiyama T."/>
            <person name="Irie R."/>
            <person name="Wakamatsu A."/>
            <person name="Hayashi K."/>
            <person name="Sato H."/>
            <person name="Nagai K."/>
            <person name="Kimura K."/>
            <person name="Makita H."/>
            <person name="Sekine M."/>
            <person name="Obayashi M."/>
            <person name="Nishi T."/>
            <person name="Shibahara T."/>
            <person name="Tanaka T."/>
            <person name="Ishii S."/>
            <person name="Yamamoto J."/>
            <person name="Saito K."/>
            <person name="Kawai Y."/>
            <person name="Isono Y."/>
            <person name="Nakamura Y."/>
            <person name="Nagahari K."/>
            <person name="Murakami K."/>
            <person name="Yasuda T."/>
            <person name="Iwayanagi T."/>
            <person name="Wagatsuma M."/>
            <person name="Shiratori A."/>
            <person name="Sudo H."/>
            <person name="Hosoiri T."/>
            <person name="Kaku Y."/>
            <person name="Kodaira H."/>
            <person name="Kondo H."/>
            <person name="Sugawara M."/>
            <person name="Takahashi M."/>
            <person name="Kanda K."/>
            <person name="Yokoi T."/>
            <person name="Furuya T."/>
            <person name="Kikkawa E."/>
            <person name="Omura Y."/>
            <person name="Abe K."/>
            <person name="Kamihara K."/>
            <person name="Katsuta N."/>
            <person name="Sato K."/>
            <person name="Tanikawa M."/>
            <person name="Yamazaki M."/>
            <person name="Ninomiya K."/>
            <person name="Ishibashi T."/>
            <person name="Yamashita H."/>
            <person name="Murakawa K."/>
            <person name="Fujimori K."/>
            <person name="Tanai H."/>
            <person name="Kimata M."/>
            <person name="Watanabe M."/>
            <person name="Hiraoka S."/>
            <person name="Chiba Y."/>
            <person name="Ishida S."/>
            <person name="Ono Y."/>
            <person name="Takiguchi S."/>
            <person name="Watanabe S."/>
            <person name="Yosida M."/>
            <person name="Hotuta T."/>
            <person name="Kusano J."/>
            <person name="Kanehori K."/>
            <person name="Takahashi-Fujii A."/>
            <person name="Hara H."/>
            <person name="Tanase T.-O."/>
            <person name="Nomura Y."/>
            <person name="Togiya S."/>
            <person name="Komai F."/>
            <person name="Hara R."/>
            <person name="Takeuchi K."/>
            <person name="Arita M."/>
            <person name="Imose N."/>
            <person name="Musashino K."/>
            <person name="Yuuki H."/>
            <person name="Oshima A."/>
            <person name="Sasaki N."/>
            <person name="Aotsuka S."/>
            <person name="Yoshikawa Y."/>
            <person name="Matsunawa H."/>
            <person name="Ichihara T."/>
            <person name="Shiohata N."/>
            <person name="Sano S."/>
            <person name="Moriya S."/>
            <person name="Momiyama H."/>
            <person name="Satoh N."/>
            <person name="Takami S."/>
            <person name="Terashima Y."/>
            <person name="Suzuki O."/>
            <person name="Nakagawa S."/>
            <person name="Senoh A."/>
            <person name="Mizoguchi H."/>
            <person name="Goto Y."/>
            <person name="Shimizu F."/>
            <person name="Wakebe H."/>
            <person name="Hishigaki H."/>
            <person name="Watanabe T."/>
            <person name="Sugiyama A."/>
            <person name="Takemoto M."/>
            <person name="Kawakami B."/>
            <person name="Yamazaki M."/>
            <person name="Watanabe K."/>
            <person name="Kumagai A."/>
            <person name="Itakura S."/>
            <person name="Fukuzumi Y."/>
            <person name="Fujimori Y."/>
            <person name="Komiyama M."/>
            <person name="Tashiro H."/>
            <person name="Tanigami A."/>
            <person name="Fujiwara T."/>
            <person name="Ono T."/>
            <person name="Yamada K."/>
            <person name="Fujii Y."/>
            <person name="Ozaki K."/>
            <person name="Hirao M."/>
            <person name="Ohmori Y."/>
            <person name="Kawabata A."/>
            <person name="Hikiji T."/>
            <person name="Kobatake N."/>
            <person name="Inagaki H."/>
            <person name="Ikema Y."/>
            <person name="Okamoto S."/>
            <person name="Okitani R."/>
            <person name="Kawakami T."/>
            <person name="Noguchi S."/>
            <person name="Itoh T."/>
            <person name="Shigeta K."/>
            <person name="Senba T."/>
            <person name="Matsumura K."/>
            <person name="Nakajima Y."/>
            <person name="Mizuno T."/>
            <person name="Morinaga M."/>
            <person name="Sasaki M."/>
            <person name="Togashi T."/>
            <person name="Oyama M."/>
            <person name="Hata H."/>
            <person name="Watanabe M."/>
            <person name="Komatsu T."/>
            <person name="Mizushima-Sugano J."/>
            <person name="Satoh T."/>
            <person name="Shirai Y."/>
            <person name="Takahashi Y."/>
            <person name="Nakagawa K."/>
            <person name="Okumura K."/>
            <person name="Nagase T."/>
            <person name="Nomura N."/>
            <person name="Kikuchi H."/>
            <person name="Masuho Y."/>
            <person name="Yamashita R."/>
            <person name="Nakai K."/>
            <person name="Yada T."/>
            <person name="Nakamura Y."/>
            <person name="Ohara O."/>
            <person name="Isogai T."/>
            <person name="Sugano S."/>
        </authorList>
    </citation>
    <scope>NUCLEOTIDE SEQUENCE [LARGE SCALE MRNA] OF 100-750 (ISOFORM 3)</scope>
    <source>
        <tissue>Placenta</tissue>
    </source>
</reference>
<organism>
    <name type="scientific">Homo sapiens</name>
    <name type="common">Human</name>
    <dbReference type="NCBI Taxonomy" id="9606"/>
    <lineage>
        <taxon>Eukaryota</taxon>
        <taxon>Metazoa</taxon>
        <taxon>Chordata</taxon>
        <taxon>Craniata</taxon>
        <taxon>Vertebrata</taxon>
        <taxon>Euteleostomi</taxon>
        <taxon>Mammalia</taxon>
        <taxon>Eutheria</taxon>
        <taxon>Euarchontoglires</taxon>
        <taxon>Primates</taxon>
        <taxon>Haplorrhini</taxon>
        <taxon>Catarrhini</taxon>
        <taxon>Hominidae</taxon>
        <taxon>Homo</taxon>
    </lineage>
</organism>
<protein>
    <recommendedName>
        <fullName>Coiled-coil domain-containing protein 142</fullName>
    </recommendedName>
</protein>
<sequence>MAQASRSGSLPPLVIVPPLRAQPGGTGEEQWERSRTGGLRWEVHCWPSGTSGGTPWWPTPADVSEDYEADAAAWRRGPAGGGPIPPALQRLRAVLLRLHREREQLLQARDCAYHLQSAVRLMKTLSPGSPSGGPSPLPQWCRDLQLHPSQGAVLRIGPGETLEPLLLARPIGLAAQCLEAVIEMQLRALGREPASPGLSSQLAELLFALPAYHTLQRKALSHVPGAARPFPTSRVLRLLTGERGCQVASRLDEALQGSALRDQLRRRCQEEGDLLPGLLGLVGGVAGSASCGLGLGGAGALWSQYWTLLWAACAQSLDLNLGPWRDPRATAQQLSQALGQASLPQECEKELASLCHRLLHQSLIWSWDQGFCQALGSALGGQSSLPTSSGTAELLQQLFPPLLDALREPRLRRIFCQPADPAPVALGLCTLQTTLLWFLGRAQQYLAAWDPASFLLLIQKDLPPLLHEAEALYSLASEESLALEVEQQLGLEIQKLTAQIQLLPEESLSVFSQECHKQAMQGFKLYMPRGRYWRLRLCPEPPSAPSEYAGLVVRTVLEPVLQGLQGLPPQAQAPALGQALTAIVGAWLDHILTHGIRFSLQGALQLKQDFGVVRELLEEEQWSLSPDLRQTLLMLSIFQQLDGALLCLLQQPLPKSQVHRRPPCCCACQEVQTTKLPSSCLNSLESLEPPLQPGTSPAQTGQLQSTLGGRGPSPEGYLVGNQQAWLALRQHQRPRWHLPFFSCLGTSPES</sequence>
<gene>
    <name type="primary">CCDC142</name>
    <name type="ORF">PSEC0243</name>
</gene>
<proteinExistence type="evidence at protein level"/>
<feature type="chain" id="PRO_0000311260" description="Coiled-coil domain-containing protein 142">
    <location>
        <begin position="1"/>
        <end position="750"/>
    </location>
</feature>
<feature type="region of interest" description="Disordered" evidence="2">
    <location>
        <begin position="1"/>
        <end position="29"/>
    </location>
</feature>
<feature type="region of interest" description="Disordered" evidence="2">
    <location>
        <begin position="687"/>
        <end position="714"/>
    </location>
</feature>
<feature type="coiled-coil region" evidence="1">
    <location>
        <begin position="87"/>
        <end position="110"/>
    </location>
</feature>
<feature type="compositionally biased region" description="Polar residues" evidence="2">
    <location>
        <begin position="693"/>
        <end position="707"/>
    </location>
</feature>
<feature type="splice variant" id="VSP_029497" description="In isoform 2." evidence="4">
    <location>
        <begin position="420"/>
        <end position="426"/>
    </location>
</feature>
<feature type="splice variant" id="VSP_029498" description="In isoform 3." evidence="3">
    <location>
        <begin position="666"/>
        <end position="750"/>
    </location>
</feature>
<feature type="sequence variant" id="VAR_037210" description="In dbSNP:rs13385919.">
    <original>R</original>
    <variation>Q</variation>
    <location>
        <position position="534"/>
    </location>
</feature>
<evidence type="ECO:0000255" key="1"/>
<evidence type="ECO:0000256" key="2">
    <source>
        <dbReference type="SAM" id="MobiDB-lite"/>
    </source>
</evidence>
<evidence type="ECO:0000303" key="3">
    <source>
    </source>
</evidence>
<evidence type="ECO:0000303" key="4">
    <source>
    </source>
</evidence>
<evidence type="ECO:0000305" key="5"/>
<name>CC142_HUMAN</name>